<evidence type="ECO:0000269" key="1">
    <source>
    </source>
</evidence>
<evidence type="ECO:0000269" key="2">
    <source>
    </source>
</evidence>
<evidence type="ECO:0000269" key="3">
    <source>
    </source>
</evidence>
<evidence type="ECO:0000303" key="4">
    <source>
    </source>
</evidence>
<evidence type="ECO:0000305" key="5"/>
<evidence type="ECO:0000312" key="6">
    <source>
        <dbReference type="HGNC" id="HGNC:4397"/>
    </source>
</evidence>
<comment type="function">
    <text evidence="3">Acts as a critical regulator of DNA damage response (DDR) signaling via specifically regulating phosphatidylinositol 3-kinase-related protein kinase (PIKK) family proteins.</text>
</comment>
<comment type="subcellular location">
    <subcellularLocation>
        <location evidence="3">Cytoplasm</location>
    </subcellularLocation>
    <subcellularLocation>
        <location evidence="3">Nucleus</location>
    </subcellularLocation>
    <text evidence="3">Localizes mainly in cytosol and to a lesser extent in the nucleus.</text>
</comment>
<comment type="alternative products">
    <event type="alternative splicing"/>
    <isoform>
        <id>Q9BYB4-1</id>
        <name>1</name>
        <sequence type="displayed"/>
    </isoform>
    <isoform>
        <id>Q9BYB4-2</id>
        <name>2</name>
        <sequence type="described" ref="VSP_006767 VSP_006768"/>
    </isoform>
</comment>
<comment type="tissue specificity">
    <text evidence="1">Ubiquitous. Highly expressed in heart, liver, skeletal muscle, kidney, spleen, thymus and pancreas. Detected at low levels in lung, placenta and brain.</text>
</comment>
<comment type="sequence caution" evidence="5">
    <conflict type="erroneous initiation">
        <sequence resource="EMBL-CDS" id="BAB33315"/>
    </conflict>
</comment>
<protein>
    <recommendedName>
        <fullName>Guanine nucleotide-binding protein subunit beta-like protein 1</fullName>
        <shortName>G protein subunit beta-like protein 1</shortName>
    </recommendedName>
    <alternativeName>
        <fullName>DGCRK3</fullName>
    </alternativeName>
    <alternativeName>
        <fullName>WD repeat-containing protein 14</fullName>
    </alternativeName>
    <alternativeName>
        <fullName>WD40 repeat-containing protein deleted in VCFS</fullName>
        <shortName>WDVCF</shortName>
    </alternativeName>
</protein>
<accession>Q9BYB4</accession>
<accession>Q9H2S2</accession>
<accession>Q9H4M4</accession>
<feature type="chain" id="PRO_0000051008" description="Guanine nucleotide-binding protein subunit beta-like protein 1">
    <location>
        <begin position="1"/>
        <end position="327"/>
    </location>
</feature>
<feature type="repeat" description="WD 1">
    <location>
        <begin position="16"/>
        <end position="54"/>
    </location>
</feature>
<feature type="repeat" description="WD 2">
    <location>
        <begin position="58"/>
        <end position="97"/>
    </location>
</feature>
<feature type="repeat" description="WD 3">
    <location>
        <begin position="103"/>
        <end position="145"/>
    </location>
</feature>
<feature type="repeat" description="WD 4">
    <location>
        <begin position="153"/>
        <end position="195"/>
    </location>
</feature>
<feature type="repeat" description="WD 5">
    <location>
        <begin position="200"/>
        <end position="237"/>
    </location>
</feature>
<feature type="repeat" description="WD 6">
    <location>
        <begin position="242"/>
        <end position="282"/>
    </location>
</feature>
<feature type="repeat" description="WD 7">
    <location>
        <begin position="286"/>
        <end position="323"/>
    </location>
</feature>
<feature type="splice variant" id="VSP_006767" description="In isoform 2." evidence="4">
    <original>VM</original>
    <variation>GL</variation>
    <location>
        <begin position="211"/>
        <end position="212"/>
    </location>
</feature>
<feature type="splice variant" id="VSP_006768" description="In isoform 2." evidence="4">
    <location>
        <begin position="213"/>
        <end position="327"/>
    </location>
</feature>
<feature type="sequence variant" id="VAR_053394" description="In dbSNP:rs35178436.">
    <original>E</original>
    <variation>K</variation>
    <location>
        <position position="30"/>
    </location>
</feature>
<feature type="sequence variant" id="VAR_053395" description="In dbSNP:rs5748449.">
    <original>R</original>
    <variation>H</variation>
    <location>
        <position position="37"/>
    </location>
</feature>
<feature type="sequence variant" id="VAR_024698" description="In dbSNP:rs2073770.">
    <original>W</original>
    <variation>G</variation>
    <location>
        <position position="239"/>
    </location>
</feature>
<feature type="sequence variant" id="VAR_035882" description="In a breast cancer sample; somatic mutation; dbSNP:rs61758989." evidence="2">
    <original>A</original>
    <variation>T</variation>
    <location>
        <position position="296"/>
    </location>
</feature>
<dbReference type="EMBL" id="AF238328">
    <property type="protein sequence ID" value="AAG36826.1"/>
    <property type="molecule type" value="mRNA"/>
</dbReference>
<dbReference type="EMBL" id="AF301895">
    <property type="protein sequence ID" value="AAG53933.1"/>
    <property type="molecule type" value="mRNA"/>
</dbReference>
<dbReference type="EMBL" id="AY007378">
    <property type="protein sequence ID" value="AAG12162.1"/>
    <property type="molecule type" value="mRNA"/>
</dbReference>
<dbReference type="EMBL" id="AB049212">
    <property type="protein sequence ID" value="BAB68408.1"/>
    <property type="molecule type" value="Genomic_DNA"/>
</dbReference>
<dbReference type="EMBL" id="AB051432">
    <property type="protein sequence ID" value="BAB33315.1"/>
    <property type="status" value="ALT_INIT"/>
    <property type="molecule type" value="mRNA"/>
</dbReference>
<dbReference type="EMBL" id="CR456496">
    <property type="protein sequence ID" value="CAG30382.1"/>
    <property type="molecule type" value="mRNA"/>
</dbReference>
<dbReference type="EMBL" id="BC012060">
    <property type="protein sequence ID" value="AAH12060.1"/>
    <property type="molecule type" value="mRNA"/>
</dbReference>
<dbReference type="CCDS" id="CCDS13768.1">
    <molecule id="Q9BYB4-1"/>
</dbReference>
<dbReference type="RefSeq" id="NP_443730.1">
    <molecule id="Q9BYB4-1"/>
    <property type="nucleotide sequence ID" value="NM_053004.3"/>
</dbReference>
<dbReference type="SMR" id="Q9BYB4"/>
<dbReference type="BioGRID" id="120061">
    <property type="interactions" value="60"/>
</dbReference>
<dbReference type="FunCoup" id="Q9BYB4">
    <property type="interactions" value="1611"/>
</dbReference>
<dbReference type="IntAct" id="Q9BYB4">
    <property type="interactions" value="34"/>
</dbReference>
<dbReference type="MINT" id="Q9BYB4"/>
<dbReference type="STRING" id="9606.ENSP00000331313"/>
<dbReference type="GlyGen" id="Q9BYB4">
    <property type="glycosylation" value="1 site, 1 O-linked glycan (1 site)"/>
</dbReference>
<dbReference type="iPTMnet" id="Q9BYB4"/>
<dbReference type="PhosphoSitePlus" id="Q9BYB4"/>
<dbReference type="BioMuta" id="GNB1L"/>
<dbReference type="DMDM" id="27151507"/>
<dbReference type="jPOST" id="Q9BYB4"/>
<dbReference type="MassIVE" id="Q9BYB4"/>
<dbReference type="PaxDb" id="9606-ENSP00000331313"/>
<dbReference type="PeptideAtlas" id="Q9BYB4"/>
<dbReference type="ProteomicsDB" id="79608">
    <molecule id="Q9BYB4-1"/>
</dbReference>
<dbReference type="ProteomicsDB" id="79609">
    <molecule id="Q9BYB4-2"/>
</dbReference>
<dbReference type="Pumba" id="Q9BYB4"/>
<dbReference type="Antibodypedia" id="7752">
    <property type="antibodies" value="108 antibodies from 21 providers"/>
</dbReference>
<dbReference type="DNASU" id="54584"/>
<dbReference type="Ensembl" id="ENST00000329517.11">
    <molecule id="Q9BYB4-1"/>
    <property type="protein sequence ID" value="ENSP00000331313.6"/>
    <property type="gene ID" value="ENSG00000185838.14"/>
</dbReference>
<dbReference type="Ensembl" id="ENST00000403325.5">
    <molecule id="Q9BYB4-1"/>
    <property type="protein sequence ID" value="ENSP00000385154.1"/>
    <property type="gene ID" value="ENSG00000185838.14"/>
</dbReference>
<dbReference type="Ensembl" id="ENST00000405009.5">
    <molecule id="Q9BYB4-2"/>
    <property type="protein sequence ID" value="ENSP00000384626.1"/>
    <property type="gene ID" value="ENSG00000185838.14"/>
</dbReference>
<dbReference type="GeneID" id="54584"/>
<dbReference type="KEGG" id="hsa:54584"/>
<dbReference type="MANE-Select" id="ENST00000329517.11">
    <property type="protein sequence ID" value="ENSP00000331313.6"/>
    <property type="RefSeq nucleotide sequence ID" value="NM_053004.3"/>
    <property type="RefSeq protein sequence ID" value="NP_443730.1"/>
</dbReference>
<dbReference type="UCSC" id="uc002zqf.2">
    <molecule id="Q9BYB4-1"/>
    <property type="organism name" value="human"/>
</dbReference>
<dbReference type="AGR" id="HGNC:4397"/>
<dbReference type="CTD" id="54584"/>
<dbReference type="DisGeNET" id="54584"/>
<dbReference type="GeneCards" id="GNB1L"/>
<dbReference type="HGNC" id="HGNC:4397">
    <property type="gene designation" value="GNB1L"/>
</dbReference>
<dbReference type="HPA" id="ENSG00000185838">
    <property type="expression patterns" value="Low tissue specificity"/>
</dbReference>
<dbReference type="MalaCards" id="GNB1L"/>
<dbReference type="MIM" id="610778">
    <property type="type" value="gene"/>
</dbReference>
<dbReference type="neXtProt" id="NX_Q9BYB4"/>
<dbReference type="OpenTargets" id="ENSG00000185838"/>
<dbReference type="PharmGKB" id="PA28777"/>
<dbReference type="VEuPathDB" id="HostDB:ENSG00000185838"/>
<dbReference type="eggNOG" id="KOG0322">
    <property type="taxonomic scope" value="Eukaryota"/>
</dbReference>
<dbReference type="GeneTree" id="ENSGT00390000018606"/>
<dbReference type="HOGENOM" id="CLU_041940_2_1_1"/>
<dbReference type="InParanoid" id="Q9BYB4"/>
<dbReference type="OMA" id="YQRQSMQ"/>
<dbReference type="OrthoDB" id="7668193at2759"/>
<dbReference type="PAN-GO" id="Q9BYB4">
    <property type="GO annotations" value="0 GO annotations based on evolutionary models"/>
</dbReference>
<dbReference type="PhylomeDB" id="Q9BYB4"/>
<dbReference type="TreeFam" id="TF344050"/>
<dbReference type="PathwayCommons" id="Q9BYB4"/>
<dbReference type="SignaLink" id="Q9BYB4"/>
<dbReference type="BioGRID-ORCS" id="54584">
    <property type="hits" value="602 hits in 1172 CRISPR screens"/>
</dbReference>
<dbReference type="ChiTaRS" id="GNB1L">
    <property type="organism name" value="human"/>
</dbReference>
<dbReference type="GeneWiki" id="GNB1L"/>
<dbReference type="GenomeRNAi" id="54584"/>
<dbReference type="Pharos" id="Q9BYB4">
    <property type="development level" value="Tbio"/>
</dbReference>
<dbReference type="PRO" id="PR:Q9BYB4"/>
<dbReference type="Proteomes" id="UP000005640">
    <property type="component" value="Chromosome 22"/>
</dbReference>
<dbReference type="RNAct" id="Q9BYB4">
    <property type="molecule type" value="protein"/>
</dbReference>
<dbReference type="Bgee" id="ENSG00000185838">
    <property type="expression patterns" value="Expressed in primordial germ cell in gonad and 102 other cell types or tissues"/>
</dbReference>
<dbReference type="ExpressionAtlas" id="Q9BYB4">
    <property type="expression patterns" value="baseline and differential"/>
</dbReference>
<dbReference type="GO" id="GO:0005737">
    <property type="term" value="C:cytoplasm"/>
    <property type="evidence" value="ECO:0000314"/>
    <property type="project" value="UniProtKB"/>
</dbReference>
<dbReference type="GO" id="GO:0005634">
    <property type="term" value="C:nucleus"/>
    <property type="evidence" value="ECO:0000314"/>
    <property type="project" value="UniProtKB"/>
</dbReference>
<dbReference type="GO" id="GO:0000077">
    <property type="term" value="P:DNA damage checkpoint signaling"/>
    <property type="evidence" value="ECO:0000315"/>
    <property type="project" value="UniProtKB"/>
</dbReference>
<dbReference type="GO" id="GO:0006974">
    <property type="term" value="P:DNA damage response"/>
    <property type="evidence" value="ECO:0000315"/>
    <property type="project" value="UniProtKB"/>
</dbReference>
<dbReference type="GO" id="GO:0035176">
    <property type="term" value="P:social behavior"/>
    <property type="evidence" value="ECO:0007669"/>
    <property type="project" value="Ensembl"/>
</dbReference>
<dbReference type="Gene3D" id="2.130.10.10">
    <property type="entry name" value="YVTN repeat-like/Quinoprotein amine dehydrogenase"/>
    <property type="match status" value="2"/>
</dbReference>
<dbReference type="InterPro" id="IPR015943">
    <property type="entry name" value="WD40/YVTN_repeat-like_dom_sf"/>
</dbReference>
<dbReference type="InterPro" id="IPR036322">
    <property type="entry name" value="WD40_repeat_dom_sf"/>
</dbReference>
<dbReference type="InterPro" id="IPR001680">
    <property type="entry name" value="WD40_rpt"/>
</dbReference>
<dbReference type="PANTHER" id="PTHR19854:SF1">
    <property type="entry name" value="GUANINE NUCLEOTIDE-BINDING PROTEIN SUBUNIT BETA-LIKE PROTEIN 1"/>
    <property type="match status" value="1"/>
</dbReference>
<dbReference type="PANTHER" id="PTHR19854">
    <property type="entry name" value="TRANSDUCIN BETA-LIKE 3"/>
    <property type="match status" value="1"/>
</dbReference>
<dbReference type="Pfam" id="PF00400">
    <property type="entry name" value="WD40"/>
    <property type="match status" value="3"/>
</dbReference>
<dbReference type="SMART" id="SM00320">
    <property type="entry name" value="WD40"/>
    <property type="match status" value="6"/>
</dbReference>
<dbReference type="SUPFAM" id="SSF50978">
    <property type="entry name" value="WD40 repeat-like"/>
    <property type="match status" value="1"/>
</dbReference>
<dbReference type="PROSITE" id="PS00678">
    <property type="entry name" value="WD_REPEATS_1"/>
    <property type="match status" value="1"/>
</dbReference>
<dbReference type="PROSITE" id="PS50082">
    <property type="entry name" value="WD_REPEATS_2"/>
    <property type="match status" value="1"/>
</dbReference>
<dbReference type="PROSITE" id="PS50294">
    <property type="entry name" value="WD_REPEATS_REGION"/>
    <property type="match status" value="2"/>
</dbReference>
<name>GNB1L_HUMAN</name>
<proteinExistence type="evidence at protein level"/>
<reference key="1">
    <citation type="journal article" date="2000" name="Biochim. Biophys. Acta">
        <title>GNB1L, a gene deleted in the critical region for DiGeorge syndrome on 22q11, encodes a G-protein beta-subunit-like polypeptide.</title>
        <authorList>
            <person name="Gong L."/>
            <person name="Liu M."/>
            <person name="Jen J."/>
            <person name="Yeh E.T.H."/>
        </authorList>
    </citation>
    <scope>NUCLEOTIDE SEQUENCE [MRNA] (ISOFORMS 1 AND 2)</scope>
    <scope>TISSUE SPECIFICITY</scope>
</reference>
<reference key="2">
    <citation type="journal article" date="2001" name="Genomics">
        <title>Isolation and characterization of a novel gene containing WD40 repeats from the region deleted in velo-cardio-facial/DiGeorge syndrome on chromosome 22q11.</title>
        <authorList>
            <person name="Funke B."/>
            <person name="Pandita R.K."/>
            <person name="Morrow B.E."/>
        </authorList>
    </citation>
    <scope>NUCLEOTIDE SEQUENCE [MRNA] (ISOFORM 1)</scope>
</reference>
<reference key="3">
    <citation type="submission" date="2000-08" db="EMBL/GenBank/DDBJ databases">
        <title>Molecular cloning of FKSG1, a novel gene deleted in DiGeorge syndrome.</title>
        <authorList>
            <person name="Wang Y.-G."/>
        </authorList>
    </citation>
    <scope>NUCLEOTIDE SEQUENCE [MRNA] (ISOFORM 1)</scope>
</reference>
<reference key="4">
    <citation type="submission" date="2000-09" db="EMBL/GenBank/DDBJ databases">
        <title>Molecular cloning of DGCRK3.</title>
        <authorList>
            <person name="Shimizu N."/>
            <person name="Minosima S."/>
            <person name="Kawasaki K."/>
            <person name="Sasaki T."/>
        </authorList>
    </citation>
    <scope>NUCLEOTIDE SEQUENCE [GENOMIC DNA]</scope>
</reference>
<reference key="5">
    <citation type="journal article" date="2001" name="DNA Res.">
        <title>Identification of novel transcribed sequences on human chromosome 22 by expressed sequence tag mapping.</title>
        <authorList>
            <person name="Hirosawa M."/>
            <person name="Nagase T."/>
            <person name="Murahashi Y."/>
            <person name="Kikuno R."/>
            <person name="Ohara O."/>
        </authorList>
    </citation>
    <scope>NUCLEOTIDE SEQUENCE [LARGE SCALE MRNA] (ISOFORM 1)</scope>
    <source>
        <tissue>Brain</tissue>
    </source>
</reference>
<reference key="6">
    <citation type="journal article" date="2004" name="Genome Biol.">
        <title>A genome annotation-driven approach to cloning the human ORFeome.</title>
        <authorList>
            <person name="Collins J.E."/>
            <person name="Wright C.L."/>
            <person name="Edwards C.A."/>
            <person name="Davis M.P."/>
            <person name="Grinham J.A."/>
            <person name="Cole C.G."/>
            <person name="Goward M.E."/>
            <person name="Aguado B."/>
            <person name="Mallya M."/>
            <person name="Mokrab Y."/>
            <person name="Huckle E.J."/>
            <person name="Beare D.M."/>
            <person name="Dunham I."/>
        </authorList>
    </citation>
    <scope>NUCLEOTIDE SEQUENCE [LARGE SCALE MRNA] (ISOFORM 1)</scope>
</reference>
<reference key="7">
    <citation type="journal article" date="1999" name="Nature">
        <title>The DNA sequence of human chromosome 22.</title>
        <authorList>
            <person name="Dunham I."/>
            <person name="Hunt A.R."/>
            <person name="Collins J.E."/>
            <person name="Bruskiewich R."/>
            <person name="Beare D.M."/>
            <person name="Clamp M."/>
            <person name="Smink L.J."/>
            <person name="Ainscough R."/>
            <person name="Almeida J.P."/>
            <person name="Babbage A.K."/>
            <person name="Bagguley C."/>
            <person name="Bailey J."/>
            <person name="Barlow K.F."/>
            <person name="Bates K.N."/>
            <person name="Beasley O.P."/>
            <person name="Bird C.P."/>
            <person name="Blakey S.E."/>
            <person name="Bridgeman A.M."/>
            <person name="Buck D."/>
            <person name="Burgess J."/>
            <person name="Burrill W.D."/>
            <person name="Burton J."/>
            <person name="Carder C."/>
            <person name="Carter N.P."/>
            <person name="Chen Y."/>
            <person name="Clark G."/>
            <person name="Clegg S.M."/>
            <person name="Cobley V.E."/>
            <person name="Cole C.G."/>
            <person name="Collier R.E."/>
            <person name="Connor R."/>
            <person name="Conroy D."/>
            <person name="Corby N.R."/>
            <person name="Coville G.J."/>
            <person name="Cox A.V."/>
            <person name="Davis J."/>
            <person name="Dawson E."/>
            <person name="Dhami P.D."/>
            <person name="Dockree C."/>
            <person name="Dodsworth S.J."/>
            <person name="Durbin R.M."/>
            <person name="Ellington A.G."/>
            <person name="Evans K.L."/>
            <person name="Fey J.M."/>
            <person name="Fleming K."/>
            <person name="French L."/>
            <person name="Garner A.A."/>
            <person name="Gilbert J.G.R."/>
            <person name="Goward M.E."/>
            <person name="Grafham D.V."/>
            <person name="Griffiths M.N.D."/>
            <person name="Hall C."/>
            <person name="Hall R.E."/>
            <person name="Hall-Tamlyn G."/>
            <person name="Heathcott R.W."/>
            <person name="Ho S."/>
            <person name="Holmes S."/>
            <person name="Hunt S.E."/>
            <person name="Jones M.C."/>
            <person name="Kershaw J."/>
            <person name="Kimberley A.M."/>
            <person name="King A."/>
            <person name="Laird G.K."/>
            <person name="Langford C.F."/>
            <person name="Leversha M.A."/>
            <person name="Lloyd C."/>
            <person name="Lloyd D.M."/>
            <person name="Martyn I.D."/>
            <person name="Mashreghi-Mohammadi M."/>
            <person name="Matthews L.H."/>
            <person name="Mccann O.T."/>
            <person name="Mcclay J."/>
            <person name="Mclaren S."/>
            <person name="McMurray A.A."/>
            <person name="Milne S.A."/>
            <person name="Mortimore B.J."/>
            <person name="Odell C.N."/>
            <person name="Pavitt R."/>
            <person name="Pearce A.V."/>
            <person name="Pearson D."/>
            <person name="Phillimore B.J.C.T."/>
            <person name="Phillips S.H."/>
            <person name="Plumb R.W."/>
            <person name="Ramsay H."/>
            <person name="Ramsey Y."/>
            <person name="Rogers L."/>
            <person name="Ross M.T."/>
            <person name="Scott C.E."/>
            <person name="Sehra H.K."/>
            <person name="Skuce C.D."/>
            <person name="Smalley S."/>
            <person name="Smith M.L."/>
            <person name="Soderlund C."/>
            <person name="Spragon L."/>
            <person name="Steward C.A."/>
            <person name="Sulston J.E."/>
            <person name="Swann R.M."/>
            <person name="Vaudin M."/>
            <person name="Wall M."/>
            <person name="Wallis J.M."/>
            <person name="Whiteley M.N."/>
            <person name="Willey D.L."/>
            <person name="Williams L."/>
            <person name="Williams S.A."/>
            <person name="Williamson H."/>
            <person name="Wilmer T.E."/>
            <person name="Wilming L."/>
            <person name="Wright C.L."/>
            <person name="Hubbard T."/>
            <person name="Bentley D.R."/>
            <person name="Beck S."/>
            <person name="Rogers J."/>
            <person name="Shimizu N."/>
            <person name="Minoshima S."/>
            <person name="Kawasaki K."/>
            <person name="Sasaki T."/>
            <person name="Asakawa S."/>
            <person name="Kudoh J."/>
            <person name="Shintani A."/>
            <person name="Shibuya K."/>
            <person name="Yoshizaki Y."/>
            <person name="Aoki N."/>
            <person name="Mitsuyama S."/>
            <person name="Roe B.A."/>
            <person name="Chen F."/>
            <person name="Chu L."/>
            <person name="Crabtree J."/>
            <person name="Deschamps S."/>
            <person name="Do A."/>
            <person name="Do T."/>
            <person name="Dorman A."/>
            <person name="Fang F."/>
            <person name="Fu Y."/>
            <person name="Hu P."/>
            <person name="Hua A."/>
            <person name="Kenton S."/>
            <person name="Lai H."/>
            <person name="Lao H.I."/>
            <person name="Lewis J."/>
            <person name="Lewis S."/>
            <person name="Lin S.-P."/>
            <person name="Loh P."/>
            <person name="Malaj E."/>
            <person name="Nguyen T."/>
            <person name="Pan H."/>
            <person name="Phan S."/>
            <person name="Qi S."/>
            <person name="Qian Y."/>
            <person name="Ray L."/>
            <person name="Ren Q."/>
            <person name="Shaull S."/>
            <person name="Sloan D."/>
            <person name="Song L."/>
            <person name="Wang Q."/>
            <person name="Wang Y."/>
            <person name="Wang Z."/>
            <person name="White J."/>
            <person name="Willingham D."/>
            <person name="Wu H."/>
            <person name="Yao Z."/>
            <person name="Zhan M."/>
            <person name="Zhang G."/>
            <person name="Chissoe S."/>
            <person name="Murray J."/>
            <person name="Miller N."/>
            <person name="Minx P."/>
            <person name="Fulton R."/>
            <person name="Johnson D."/>
            <person name="Bemis G."/>
            <person name="Bentley D."/>
            <person name="Bradshaw H."/>
            <person name="Bourne S."/>
            <person name="Cordes M."/>
            <person name="Du Z."/>
            <person name="Fulton L."/>
            <person name="Goela D."/>
            <person name="Graves T."/>
            <person name="Hawkins J."/>
            <person name="Hinds K."/>
            <person name="Kemp K."/>
            <person name="Latreille P."/>
            <person name="Layman D."/>
            <person name="Ozersky P."/>
            <person name="Rohlfing T."/>
            <person name="Scheet P."/>
            <person name="Walker C."/>
            <person name="Wamsley A."/>
            <person name="Wohldmann P."/>
            <person name="Pepin K."/>
            <person name="Nelson J."/>
            <person name="Korf I."/>
            <person name="Bedell J.A."/>
            <person name="Hillier L.W."/>
            <person name="Mardis E."/>
            <person name="Waterston R."/>
            <person name="Wilson R."/>
            <person name="Emanuel B.S."/>
            <person name="Shaikh T."/>
            <person name="Kurahashi H."/>
            <person name="Saitta S."/>
            <person name="Budarf M.L."/>
            <person name="McDermid H.E."/>
            <person name="Johnson A."/>
            <person name="Wong A.C.C."/>
            <person name="Morrow B.E."/>
            <person name="Edelmann L."/>
            <person name="Kim U.J."/>
            <person name="Shizuya H."/>
            <person name="Simon M.I."/>
            <person name="Dumanski J.P."/>
            <person name="Peyrard M."/>
            <person name="Kedra D."/>
            <person name="Seroussi E."/>
            <person name="Fransson I."/>
            <person name="Tapia I."/>
            <person name="Bruder C.E."/>
            <person name="O'Brien K.P."/>
            <person name="Wilkinson P."/>
            <person name="Bodenteich A."/>
            <person name="Hartman K."/>
            <person name="Hu X."/>
            <person name="Khan A.S."/>
            <person name="Lane L."/>
            <person name="Tilahun Y."/>
            <person name="Wright H."/>
        </authorList>
    </citation>
    <scope>NUCLEOTIDE SEQUENCE [LARGE SCALE GENOMIC DNA]</scope>
</reference>
<reference key="8">
    <citation type="journal article" date="2004" name="Genome Res.">
        <title>The status, quality, and expansion of the NIH full-length cDNA project: the Mammalian Gene Collection (MGC).</title>
        <authorList>
            <consortium name="The MGC Project Team"/>
        </authorList>
    </citation>
    <scope>NUCLEOTIDE SEQUENCE [LARGE SCALE MRNA] (ISOFORM 1)</scope>
    <source>
        <tissue>Lung</tissue>
    </source>
</reference>
<reference key="9">
    <citation type="journal article" date="2011" name="BMC Syst. Biol.">
        <title>Initial characterization of the human central proteome.</title>
        <authorList>
            <person name="Burkard T.R."/>
            <person name="Planyavsky M."/>
            <person name="Kaupe I."/>
            <person name="Breitwieser F.P."/>
            <person name="Buerckstuemmer T."/>
            <person name="Bennett K.L."/>
            <person name="Superti-Furga G."/>
            <person name="Colinge J."/>
        </authorList>
    </citation>
    <scope>IDENTIFICATION BY MASS SPECTROMETRY [LARGE SCALE ANALYSIS]</scope>
</reference>
<reference key="10">
    <citation type="journal article" date="2006" name="Science">
        <title>The consensus coding sequences of human breast and colorectal cancers.</title>
        <authorList>
            <person name="Sjoeblom T."/>
            <person name="Jones S."/>
            <person name="Wood L.D."/>
            <person name="Parsons D.W."/>
            <person name="Lin J."/>
            <person name="Barber T.D."/>
            <person name="Mandelker D."/>
            <person name="Leary R.J."/>
            <person name="Ptak J."/>
            <person name="Silliman N."/>
            <person name="Szabo S."/>
            <person name="Buckhaults P."/>
            <person name="Farrell C."/>
            <person name="Meeh P."/>
            <person name="Markowitz S.D."/>
            <person name="Willis J."/>
            <person name="Dawson D."/>
            <person name="Willson J.K.V."/>
            <person name="Gazdar A.F."/>
            <person name="Hartigan J."/>
            <person name="Wu L."/>
            <person name="Liu C."/>
            <person name="Parmigiani G."/>
            <person name="Park B.H."/>
            <person name="Bachman K.E."/>
            <person name="Papadopoulos N."/>
            <person name="Vogelstein B."/>
            <person name="Kinzler K.W."/>
            <person name="Velculescu V.E."/>
        </authorList>
    </citation>
    <scope>VARIANT [LARGE SCALE ANALYSIS] THR-296</scope>
</reference>
<reference key="11">
    <citation type="journal article" date="2023" name="Mol. Cell">
        <title>FACS-based genome-wide CRISPR screens define key regulators of DNA damage signaling pathways.</title>
        <authorList>
            <person name="Huang M."/>
            <person name="Yao F."/>
            <person name="Nie L."/>
            <person name="Wang C."/>
            <person name="Su D."/>
            <person name="Zhang H."/>
            <person name="Li S."/>
            <person name="Tang M."/>
            <person name="Feng X."/>
            <person name="Yu B."/>
            <person name="Chen Z."/>
            <person name="Wang S."/>
            <person name="Yin L."/>
            <person name="Mou L."/>
            <person name="Hart T."/>
            <person name="Chen J."/>
        </authorList>
    </citation>
    <scope>FUNCTION</scope>
    <scope>SUBCELLULAR LOCATION</scope>
</reference>
<sequence length="327" mass="35618">MTAPCPPPPPDPQFVLRGTQSPVHALHFCEGAQAQGRPLLFSGSQSGLVHIWSLQTRRAVTTLDGHGGQCVTWLQTLPQGRQLLSQGRDLKLCLWDLAEGRSAVVDSVCLESVGFCRSSILAGGQPRWTLAVPGRGSDEVQILEMPSKTSVCALKPKADAKLGMPMCLRLWQADCSSRPLLLAGYEDGSVVLWDVSEQKVCSRIACHEEPVMDLDFDSQKARGISGSAGKALAVWSLDWQQALQVRGTHELTNPGIAEVTIRPDRKILATAGWDHRIRVFHWRTMQPLAVLAFHSAAVQCVAFTADGLLAAGSKDQRISLWSLYPRA</sequence>
<organism>
    <name type="scientific">Homo sapiens</name>
    <name type="common">Human</name>
    <dbReference type="NCBI Taxonomy" id="9606"/>
    <lineage>
        <taxon>Eukaryota</taxon>
        <taxon>Metazoa</taxon>
        <taxon>Chordata</taxon>
        <taxon>Craniata</taxon>
        <taxon>Vertebrata</taxon>
        <taxon>Euteleostomi</taxon>
        <taxon>Mammalia</taxon>
        <taxon>Eutheria</taxon>
        <taxon>Euarchontoglires</taxon>
        <taxon>Primates</taxon>
        <taxon>Haplorrhini</taxon>
        <taxon>Catarrhini</taxon>
        <taxon>Hominidae</taxon>
        <taxon>Homo</taxon>
    </lineage>
</organism>
<keyword id="KW-0025">Alternative splicing</keyword>
<keyword id="KW-0963">Cytoplasm</keyword>
<keyword id="KW-0227">DNA damage</keyword>
<keyword id="KW-0539">Nucleus</keyword>
<keyword id="KW-1267">Proteomics identification</keyword>
<keyword id="KW-1185">Reference proteome</keyword>
<keyword id="KW-0677">Repeat</keyword>
<keyword id="KW-0853">WD repeat</keyword>
<gene>
    <name evidence="6" type="primary">GNB1L</name>
    <name type="synonym">GY2</name>
    <name type="synonym">KIAA1645</name>
    <name type="synonym">WDR14</name>
    <name type="ORF">FKSG1</name>
</gene>